<organism>
    <name type="scientific">Austrophasma gansbaaiense</name>
    <name type="common">Gladiator</name>
    <name type="synonym">Heel-walker</name>
    <dbReference type="NCBI Taxonomy" id="253136"/>
    <lineage>
        <taxon>Eukaryota</taxon>
        <taxon>Metazoa</taxon>
        <taxon>Ecdysozoa</taxon>
        <taxon>Arthropoda</taxon>
        <taxon>Hexapoda</taxon>
        <taxon>Insecta</taxon>
        <taxon>Pterygota</taxon>
        <taxon>Neoptera</taxon>
        <taxon>Polyneoptera</taxon>
        <taxon>Mantophasmatodea</taxon>
        <taxon>Austrophasmatidae</taxon>
        <taxon>Austrophasma</taxon>
    </lineage>
</organism>
<proteinExistence type="evidence at protein level"/>
<name>CORZ_AUSGA</name>
<sequence length="11" mass="1368">QTFHYSQGWTN</sequence>
<comment type="function">
    <text evidence="1">Cardioactive peptide. Corazonin is probably involved in the physiological regulation of the heart beat (By similarity).</text>
</comment>
<comment type="subcellular location">
    <subcellularLocation>
        <location evidence="6">Secreted</location>
    </subcellularLocation>
</comment>
<comment type="similarity">
    <text evidence="2">Belongs to the corazonin family.</text>
</comment>
<evidence type="ECO:0000250" key="1">
    <source>
        <dbReference type="UniProtKB" id="Q26377"/>
    </source>
</evidence>
<evidence type="ECO:0000255" key="2"/>
<evidence type="ECO:0000269" key="3">
    <source>
    </source>
</evidence>
<evidence type="ECO:0000303" key="4">
    <source>
    </source>
</evidence>
<evidence type="ECO:0000305" key="5"/>
<evidence type="ECO:0000305" key="6">
    <source>
    </source>
</evidence>
<protein>
    <recommendedName>
        <fullName evidence="4">Corazonin</fullName>
    </recommendedName>
</protein>
<reference evidence="5" key="1">
    <citation type="journal article" date="2012" name="Syst. Biol.">
        <title>Peptidomics-based phylogeny and biogeography of Mantophasmatodea (Hexapoda).</title>
        <authorList>
            <person name="Predel R."/>
            <person name="Neupert S."/>
            <person name="Huetteroth W."/>
            <person name="Kahnt J."/>
            <person name="Waidelich D."/>
            <person name="Roth S."/>
        </authorList>
    </citation>
    <scope>PROTEIN SEQUENCE</scope>
    <scope>PYROGLUTAMATE FORMATION AT GLN-1</scope>
    <scope>AMIDATION AT ASN-11</scope>
    <source>
        <tissue evidence="3">Corpora cardiaca</tissue>
    </source>
</reference>
<dbReference type="GO" id="GO:0005576">
    <property type="term" value="C:extracellular region"/>
    <property type="evidence" value="ECO:0007669"/>
    <property type="project" value="UniProtKB-SubCell"/>
</dbReference>
<dbReference type="GO" id="GO:0007218">
    <property type="term" value="P:neuropeptide signaling pathway"/>
    <property type="evidence" value="ECO:0007669"/>
    <property type="project" value="UniProtKB-KW"/>
</dbReference>
<keyword id="KW-0027">Amidation</keyword>
<keyword id="KW-0903">Direct protein sequencing</keyword>
<keyword id="KW-0527">Neuropeptide</keyword>
<keyword id="KW-0873">Pyrrolidone carboxylic acid</keyword>
<keyword id="KW-0964">Secreted</keyword>
<accession>B3A0F4</accession>
<feature type="peptide" id="PRO_0000421701" description="Corazonin" evidence="3">
    <location>
        <begin position="1"/>
        <end position="11"/>
    </location>
</feature>
<feature type="modified residue" description="Pyrrolidone carboxylic acid" evidence="3">
    <location>
        <position position="1"/>
    </location>
</feature>
<feature type="modified residue" description="Asparagine amide" evidence="3">
    <location>
        <position position="11"/>
    </location>
</feature>